<comment type="function">
    <text evidence="1">Catalyzes the transfer of a phosphate group to glutamate to form L-glutamate 5-phosphate.</text>
</comment>
<comment type="catalytic activity">
    <reaction evidence="1">
        <text>L-glutamate + ATP = L-glutamyl 5-phosphate + ADP</text>
        <dbReference type="Rhea" id="RHEA:14877"/>
        <dbReference type="ChEBI" id="CHEBI:29985"/>
        <dbReference type="ChEBI" id="CHEBI:30616"/>
        <dbReference type="ChEBI" id="CHEBI:58274"/>
        <dbReference type="ChEBI" id="CHEBI:456216"/>
        <dbReference type="EC" id="2.7.2.11"/>
    </reaction>
</comment>
<comment type="pathway">
    <text evidence="1">Amino-acid biosynthesis; L-proline biosynthesis; L-glutamate 5-semialdehyde from L-glutamate: step 1/2.</text>
</comment>
<comment type="subcellular location">
    <subcellularLocation>
        <location evidence="1">Cytoplasm</location>
    </subcellularLocation>
</comment>
<comment type="similarity">
    <text evidence="1">Belongs to the glutamate 5-kinase family.</text>
</comment>
<evidence type="ECO:0000255" key="1">
    <source>
        <dbReference type="HAMAP-Rule" id="MF_00456"/>
    </source>
</evidence>
<gene>
    <name evidence="1" type="primary">proB</name>
    <name type="ordered locus">Pmen_3679</name>
</gene>
<accession>A4XYL1</accession>
<sequence>MRDKVTGARRWVVKIGSALLTADGRGLDRAAMAVWVKQMVALREQGVELVLVSSGAVAAGMSRLGWTSRPSAMHELQAAAAIGQMALVQAWESSFAEHGRRTAQILLTHDDLSDRKRYLNARSTLRTLVGLDVIPVINENDTVVTDEIRFGDNDTLAALVANLVEADLLVILTDRDGMYTADPRHNPDAELIHEARADDPALDAVAGGVGGALGRGGMQTKLRASRLAARSGAHTVIVGGAIEQVLARLKAGERLGTLLAPERGLLAARKQWLAGHLQTRGTLVLDAGAVKALSQDRKSLLPVGVKAVQGSFRRGEMVVCVAPDGREVARGLVNYSALEAQKIIGQPSDAIEKLLGYVDEPELVHRDNLILV</sequence>
<feature type="chain" id="PRO_1000081094" description="Glutamate 5-kinase">
    <location>
        <begin position="1"/>
        <end position="372"/>
    </location>
</feature>
<feature type="domain" description="PUA" evidence="1">
    <location>
        <begin position="280"/>
        <end position="358"/>
    </location>
</feature>
<feature type="binding site" evidence="1">
    <location>
        <position position="14"/>
    </location>
    <ligand>
        <name>ATP</name>
        <dbReference type="ChEBI" id="CHEBI:30616"/>
    </ligand>
</feature>
<feature type="binding site" evidence="1">
    <location>
        <position position="54"/>
    </location>
    <ligand>
        <name>substrate</name>
    </ligand>
</feature>
<feature type="binding site" evidence="1">
    <location>
        <position position="141"/>
    </location>
    <ligand>
        <name>substrate</name>
    </ligand>
</feature>
<feature type="binding site" evidence="1">
    <location>
        <position position="153"/>
    </location>
    <ligand>
        <name>substrate</name>
    </ligand>
</feature>
<feature type="binding site" evidence="1">
    <location>
        <begin position="173"/>
        <end position="174"/>
    </location>
    <ligand>
        <name>ATP</name>
        <dbReference type="ChEBI" id="CHEBI:30616"/>
    </ligand>
</feature>
<reference key="1">
    <citation type="submission" date="2007-04" db="EMBL/GenBank/DDBJ databases">
        <title>Complete sequence of Pseudomonas mendocina ymp.</title>
        <authorList>
            <consortium name="US DOE Joint Genome Institute"/>
            <person name="Copeland A."/>
            <person name="Lucas S."/>
            <person name="Lapidus A."/>
            <person name="Barry K."/>
            <person name="Glavina del Rio T."/>
            <person name="Dalin E."/>
            <person name="Tice H."/>
            <person name="Pitluck S."/>
            <person name="Kiss H."/>
            <person name="Brettin T."/>
            <person name="Detter J.C."/>
            <person name="Bruce D."/>
            <person name="Han C."/>
            <person name="Schmutz J."/>
            <person name="Larimer F."/>
            <person name="Land M."/>
            <person name="Hauser L."/>
            <person name="Kyrpides N."/>
            <person name="Mikhailova N."/>
            <person name="Hersman L."/>
            <person name="Dubois J."/>
            <person name="Maurice P."/>
            <person name="Richardson P."/>
        </authorList>
    </citation>
    <scope>NUCLEOTIDE SEQUENCE [LARGE SCALE GENOMIC DNA]</scope>
    <source>
        <strain>ymp</strain>
    </source>
</reference>
<organism>
    <name type="scientific">Ectopseudomonas mendocina (strain ymp)</name>
    <name type="common">Pseudomonas mendocina</name>
    <dbReference type="NCBI Taxonomy" id="399739"/>
    <lineage>
        <taxon>Bacteria</taxon>
        <taxon>Pseudomonadati</taxon>
        <taxon>Pseudomonadota</taxon>
        <taxon>Gammaproteobacteria</taxon>
        <taxon>Pseudomonadales</taxon>
        <taxon>Pseudomonadaceae</taxon>
        <taxon>Ectopseudomonas</taxon>
    </lineage>
</organism>
<name>PROB_ECTM1</name>
<dbReference type="EC" id="2.7.2.11" evidence="1"/>
<dbReference type="EMBL" id="CP000680">
    <property type="protein sequence ID" value="ABP86427.1"/>
    <property type="molecule type" value="Genomic_DNA"/>
</dbReference>
<dbReference type="SMR" id="A4XYL1"/>
<dbReference type="STRING" id="399739.Pmen_3679"/>
<dbReference type="KEGG" id="pmy:Pmen_3679"/>
<dbReference type="PATRIC" id="fig|399739.8.peg.3731"/>
<dbReference type="eggNOG" id="COG0263">
    <property type="taxonomic scope" value="Bacteria"/>
</dbReference>
<dbReference type="HOGENOM" id="CLU_025400_2_0_6"/>
<dbReference type="OrthoDB" id="9804434at2"/>
<dbReference type="UniPathway" id="UPA00098">
    <property type="reaction ID" value="UER00359"/>
</dbReference>
<dbReference type="GO" id="GO:0005829">
    <property type="term" value="C:cytosol"/>
    <property type="evidence" value="ECO:0007669"/>
    <property type="project" value="TreeGrafter"/>
</dbReference>
<dbReference type="GO" id="GO:0005524">
    <property type="term" value="F:ATP binding"/>
    <property type="evidence" value="ECO:0007669"/>
    <property type="project" value="UniProtKB-KW"/>
</dbReference>
<dbReference type="GO" id="GO:0004349">
    <property type="term" value="F:glutamate 5-kinase activity"/>
    <property type="evidence" value="ECO:0007669"/>
    <property type="project" value="UniProtKB-UniRule"/>
</dbReference>
<dbReference type="GO" id="GO:0003723">
    <property type="term" value="F:RNA binding"/>
    <property type="evidence" value="ECO:0007669"/>
    <property type="project" value="InterPro"/>
</dbReference>
<dbReference type="GO" id="GO:0055129">
    <property type="term" value="P:L-proline biosynthetic process"/>
    <property type="evidence" value="ECO:0007669"/>
    <property type="project" value="UniProtKB-UniRule"/>
</dbReference>
<dbReference type="CDD" id="cd04242">
    <property type="entry name" value="AAK_G5K_ProB"/>
    <property type="match status" value="1"/>
</dbReference>
<dbReference type="CDD" id="cd21157">
    <property type="entry name" value="PUA_G5K"/>
    <property type="match status" value="1"/>
</dbReference>
<dbReference type="FunFam" id="2.30.130.10:FF:000007">
    <property type="entry name" value="Glutamate 5-kinase"/>
    <property type="match status" value="1"/>
</dbReference>
<dbReference type="FunFam" id="3.40.1160.10:FF:000018">
    <property type="entry name" value="Glutamate 5-kinase"/>
    <property type="match status" value="1"/>
</dbReference>
<dbReference type="Gene3D" id="3.40.1160.10">
    <property type="entry name" value="Acetylglutamate kinase-like"/>
    <property type="match status" value="2"/>
</dbReference>
<dbReference type="Gene3D" id="2.30.130.10">
    <property type="entry name" value="PUA domain"/>
    <property type="match status" value="1"/>
</dbReference>
<dbReference type="HAMAP" id="MF_00456">
    <property type="entry name" value="ProB"/>
    <property type="match status" value="1"/>
</dbReference>
<dbReference type="InterPro" id="IPR036393">
    <property type="entry name" value="AceGlu_kinase-like_sf"/>
</dbReference>
<dbReference type="InterPro" id="IPR001048">
    <property type="entry name" value="Asp/Glu/Uridylate_kinase"/>
</dbReference>
<dbReference type="InterPro" id="IPR041739">
    <property type="entry name" value="G5K_ProB"/>
</dbReference>
<dbReference type="InterPro" id="IPR001057">
    <property type="entry name" value="Glu/AcGlu_kinase"/>
</dbReference>
<dbReference type="InterPro" id="IPR011529">
    <property type="entry name" value="Glu_5kinase"/>
</dbReference>
<dbReference type="InterPro" id="IPR005715">
    <property type="entry name" value="Glu_5kinase/COase_Synthase"/>
</dbReference>
<dbReference type="InterPro" id="IPR019797">
    <property type="entry name" value="Glutamate_5-kinase_CS"/>
</dbReference>
<dbReference type="InterPro" id="IPR002478">
    <property type="entry name" value="PUA"/>
</dbReference>
<dbReference type="InterPro" id="IPR015947">
    <property type="entry name" value="PUA-like_sf"/>
</dbReference>
<dbReference type="InterPro" id="IPR036974">
    <property type="entry name" value="PUA_sf"/>
</dbReference>
<dbReference type="NCBIfam" id="TIGR01027">
    <property type="entry name" value="proB"/>
    <property type="match status" value="1"/>
</dbReference>
<dbReference type="PANTHER" id="PTHR43654">
    <property type="entry name" value="GLUTAMATE 5-KINASE"/>
    <property type="match status" value="1"/>
</dbReference>
<dbReference type="PANTHER" id="PTHR43654:SF1">
    <property type="entry name" value="ISOPENTENYL PHOSPHATE KINASE"/>
    <property type="match status" value="1"/>
</dbReference>
<dbReference type="Pfam" id="PF00696">
    <property type="entry name" value="AA_kinase"/>
    <property type="match status" value="1"/>
</dbReference>
<dbReference type="Pfam" id="PF01472">
    <property type="entry name" value="PUA"/>
    <property type="match status" value="1"/>
</dbReference>
<dbReference type="PIRSF" id="PIRSF000729">
    <property type="entry name" value="GK"/>
    <property type="match status" value="1"/>
</dbReference>
<dbReference type="PRINTS" id="PR00474">
    <property type="entry name" value="GLU5KINASE"/>
</dbReference>
<dbReference type="SMART" id="SM00359">
    <property type="entry name" value="PUA"/>
    <property type="match status" value="1"/>
</dbReference>
<dbReference type="SUPFAM" id="SSF53633">
    <property type="entry name" value="Carbamate kinase-like"/>
    <property type="match status" value="1"/>
</dbReference>
<dbReference type="SUPFAM" id="SSF88697">
    <property type="entry name" value="PUA domain-like"/>
    <property type="match status" value="1"/>
</dbReference>
<dbReference type="PROSITE" id="PS00902">
    <property type="entry name" value="GLUTAMATE_5_KINASE"/>
    <property type="match status" value="1"/>
</dbReference>
<dbReference type="PROSITE" id="PS50890">
    <property type="entry name" value="PUA"/>
    <property type="match status" value="1"/>
</dbReference>
<protein>
    <recommendedName>
        <fullName evidence="1">Glutamate 5-kinase</fullName>
        <ecNumber evidence="1">2.7.2.11</ecNumber>
    </recommendedName>
    <alternativeName>
        <fullName evidence="1">Gamma-glutamyl kinase</fullName>
        <shortName evidence="1">GK</shortName>
    </alternativeName>
</protein>
<proteinExistence type="inferred from homology"/>
<keyword id="KW-0028">Amino-acid biosynthesis</keyword>
<keyword id="KW-0067">ATP-binding</keyword>
<keyword id="KW-0963">Cytoplasm</keyword>
<keyword id="KW-0418">Kinase</keyword>
<keyword id="KW-0547">Nucleotide-binding</keyword>
<keyword id="KW-0641">Proline biosynthesis</keyword>
<keyword id="KW-0808">Transferase</keyword>